<reference key="1">
    <citation type="journal article" date="2011" name="PLoS Genet.">
        <title>The evolution of host specialization in the vertebrate gut symbiont Lactobacillus reuteri.</title>
        <authorList>
            <person name="Frese S.A."/>
            <person name="Benson A.K."/>
            <person name="Tannock G.W."/>
            <person name="Loach D.M."/>
            <person name="Kim J."/>
            <person name="Zhang M."/>
            <person name="Oh P.L."/>
            <person name="Heng N.C."/>
            <person name="Patil P.B."/>
            <person name="Juge N."/>
            <person name="Mackenzie D.A."/>
            <person name="Pearson B.M."/>
            <person name="Lapidus A."/>
            <person name="Dalin E."/>
            <person name="Tice H."/>
            <person name="Goltsman E."/>
            <person name="Land M."/>
            <person name="Hauser L."/>
            <person name="Ivanova N."/>
            <person name="Kyrpides N.C."/>
            <person name="Walter J."/>
        </authorList>
    </citation>
    <scope>NUCLEOTIDE SEQUENCE [LARGE SCALE GENOMIC DNA]</scope>
    <source>
        <strain>DSM 20016</strain>
    </source>
</reference>
<protein>
    <recommendedName>
        <fullName>Dihydroorotate dehydrogenase A (fumarate)</fullName>
        <shortName>DHOD A</shortName>
        <shortName>DHODase A</shortName>
        <shortName>DHOdehase A</shortName>
        <ecNumber>1.3.98.1</ecNumber>
    </recommendedName>
</protein>
<sequence length="308" mass="32737">MQETQRLAVELPGLSLKNPIIAASGTCGYGQEAAKKYNLNHLGSLVLKSTTLYPRQGNPRPRVCETSAGWLNANGLQNVGITAATNEKIPWLRKNYPQLPIIASAAGFSEDEYVKVVSEFANTAGVKAIELNVSCPNVKHGGMAMGTDPEVLQRLVKQVVKAALGIPIYVKLTPNVTNIVPLAQAAEQGGANGLTMINTLTGLSIDLKTRRPALANVTGGLSGPAIKPLALRMIHQVRQVSSLPIIGVGGIESAEDVLEFMMAGANAVQIGAASFHDPLACPKIAADLPIVMDRYGIKKLTDLWEVRF</sequence>
<name>PYRDA_LIMRD</name>
<dbReference type="EC" id="1.3.98.1"/>
<dbReference type="EMBL" id="CP000705">
    <property type="protein sequence ID" value="ABQ82397.1"/>
    <property type="molecule type" value="Genomic_DNA"/>
</dbReference>
<dbReference type="RefSeq" id="WP_003669699.1">
    <property type="nucleotide sequence ID" value="NC_009513.1"/>
</dbReference>
<dbReference type="SMR" id="A5VHS3"/>
<dbReference type="STRING" id="557436.Lreu_0125"/>
<dbReference type="KEGG" id="lre:Lreu_0125"/>
<dbReference type="PATRIC" id="fig|557436.17.peg.300"/>
<dbReference type="eggNOG" id="COG0167">
    <property type="taxonomic scope" value="Bacteria"/>
</dbReference>
<dbReference type="HOGENOM" id="CLU_042042_0_0_9"/>
<dbReference type="UniPathway" id="UPA00070"/>
<dbReference type="Proteomes" id="UP000001991">
    <property type="component" value="Chromosome"/>
</dbReference>
<dbReference type="GO" id="GO:0005737">
    <property type="term" value="C:cytoplasm"/>
    <property type="evidence" value="ECO:0007669"/>
    <property type="project" value="UniProtKB-SubCell"/>
</dbReference>
<dbReference type="GO" id="GO:1990663">
    <property type="term" value="F:dihydroorotate dehydrogenase (fumarate) activity"/>
    <property type="evidence" value="ECO:0007669"/>
    <property type="project" value="UniProtKB-EC"/>
</dbReference>
<dbReference type="GO" id="GO:0006207">
    <property type="term" value="P:'de novo' pyrimidine nucleobase biosynthetic process"/>
    <property type="evidence" value="ECO:0007669"/>
    <property type="project" value="InterPro"/>
</dbReference>
<dbReference type="GO" id="GO:0044205">
    <property type="term" value="P:'de novo' UMP biosynthetic process"/>
    <property type="evidence" value="ECO:0007669"/>
    <property type="project" value="UniProtKB-UniRule"/>
</dbReference>
<dbReference type="CDD" id="cd04740">
    <property type="entry name" value="DHOD_1B_like"/>
    <property type="match status" value="1"/>
</dbReference>
<dbReference type="FunFam" id="3.20.20.70:FF:000027">
    <property type="entry name" value="Dihydropyrimidine dehydrogenase [NADP(+)]"/>
    <property type="match status" value="1"/>
</dbReference>
<dbReference type="Gene3D" id="3.20.20.70">
    <property type="entry name" value="Aldolase class I"/>
    <property type="match status" value="1"/>
</dbReference>
<dbReference type="HAMAP" id="MF_00224">
    <property type="entry name" value="DHO_dh_type1"/>
    <property type="match status" value="1"/>
</dbReference>
<dbReference type="InterPro" id="IPR013785">
    <property type="entry name" value="Aldolase_TIM"/>
</dbReference>
<dbReference type="InterPro" id="IPR050074">
    <property type="entry name" value="DHO_dehydrogenase"/>
</dbReference>
<dbReference type="InterPro" id="IPR033888">
    <property type="entry name" value="DHOD_1B"/>
</dbReference>
<dbReference type="InterPro" id="IPR024920">
    <property type="entry name" value="Dihydroorotate_DH_1"/>
</dbReference>
<dbReference type="InterPro" id="IPR012135">
    <property type="entry name" value="Dihydroorotate_DH_1_2"/>
</dbReference>
<dbReference type="InterPro" id="IPR005720">
    <property type="entry name" value="Dihydroorotate_DH_cat"/>
</dbReference>
<dbReference type="InterPro" id="IPR001295">
    <property type="entry name" value="Dihydroorotate_DH_CS"/>
</dbReference>
<dbReference type="InterPro" id="IPR049622">
    <property type="entry name" value="Dihydroorotate_DH_I"/>
</dbReference>
<dbReference type="NCBIfam" id="NF005574">
    <property type="entry name" value="PRK07259.1"/>
    <property type="match status" value="1"/>
</dbReference>
<dbReference type="NCBIfam" id="TIGR01037">
    <property type="entry name" value="pyrD_sub1_fam"/>
    <property type="match status" value="1"/>
</dbReference>
<dbReference type="PANTHER" id="PTHR48109:SF1">
    <property type="entry name" value="DIHYDROOROTATE DEHYDROGENASE (FUMARATE)"/>
    <property type="match status" value="1"/>
</dbReference>
<dbReference type="PANTHER" id="PTHR48109">
    <property type="entry name" value="DIHYDROOROTATE DEHYDROGENASE (QUINONE), MITOCHONDRIAL-RELATED"/>
    <property type="match status" value="1"/>
</dbReference>
<dbReference type="Pfam" id="PF01180">
    <property type="entry name" value="DHO_dh"/>
    <property type="match status" value="1"/>
</dbReference>
<dbReference type="PIRSF" id="PIRSF000164">
    <property type="entry name" value="DHO_oxidase"/>
    <property type="match status" value="1"/>
</dbReference>
<dbReference type="SUPFAM" id="SSF51395">
    <property type="entry name" value="FMN-linked oxidoreductases"/>
    <property type="match status" value="1"/>
</dbReference>
<dbReference type="PROSITE" id="PS00911">
    <property type="entry name" value="DHODEHASE_1"/>
    <property type="match status" value="1"/>
</dbReference>
<dbReference type="PROSITE" id="PS00912">
    <property type="entry name" value="DHODEHASE_2"/>
    <property type="match status" value="1"/>
</dbReference>
<feature type="chain" id="PRO_0000336448" description="Dihydroorotate dehydrogenase A (fumarate)">
    <location>
        <begin position="1"/>
        <end position="308"/>
    </location>
</feature>
<feature type="active site" description="Nucleophile">
    <location>
        <position position="135"/>
    </location>
</feature>
<feature type="binding site" evidence="1">
    <location>
        <position position="24"/>
    </location>
    <ligand>
        <name>FMN</name>
        <dbReference type="ChEBI" id="CHEBI:58210"/>
    </ligand>
</feature>
<feature type="binding site" evidence="1">
    <location>
        <begin position="48"/>
        <end position="49"/>
    </location>
    <ligand>
        <name>FMN</name>
        <dbReference type="ChEBI" id="CHEBI:58210"/>
    </ligand>
</feature>
<feature type="binding site" evidence="1">
    <location>
        <position position="48"/>
    </location>
    <ligand>
        <name>substrate</name>
    </ligand>
</feature>
<feature type="binding site" evidence="1">
    <location>
        <begin position="72"/>
        <end position="76"/>
    </location>
    <ligand>
        <name>substrate</name>
    </ligand>
</feature>
<feature type="binding site" evidence="1">
    <location>
        <position position="132"/>
    </location>
    <ligand>
        <name>FMN</name>
        <dbReference type="ChEBI" id="CHEBI:58210"/>
    </ligand>
</feature>
<feature type="binding site" evidence="1">
    <location>
        <position position="132"/>
    </location>
    <ligand>
        <name>substrate</name>
    </ligand>
</feature>
<feature type="binding site" evidence="1">
    <location>
        <position position="171"/>
    </location>
    <ligand>
        <name>FMN</name>
        <dbReference type="ChEBI" id="CHEBI:58210"/>
    </ligand>
</feature>
<feature type="binding site" evidence="1">
    <location>
        <position position="197"/>
    </location>
    <ligand>
        <name>FMN</name>
        <dbReference type="ChEBI" id="CHEBI:58210"/>
    </ligand>
</feature>
<feature type="binding site" evidence="1">
    <location>
        <begin position="198"/>
        <end position="199"/>
    </location>
    <ligand>
        <name>substrate</name>
    </ligand>
</feature>
<feature type="binding site" evidence="1">
    <location>
        <position position="223"/>
    </location>
    <ligand>
        <name>FMN</name>
        <dbReference type="ChEBI" id="CHEBI:58210"/>
    </ligand>
</feature>
<feature type="binding site" evidence="1">
    <location>
        <begin position="249"/>
        <end position="250"/>
    </location>
    <ligand>
        <name>FMN</name>
        <dbReference type="ChEBI" id="CHEBI:58210"/>
    </ligand>
</feature>
<evidence type="ECO:0000250" key="1"/>
<evidence type="ECO:0000305" key="2"/>
<accession>A5VHS3</accession>
<comment type="function">
    <text evidence="1">Catalyzes the conversion of dihydroorotate to orotate with fumarate as the electron acceptor.</text>
</comment>
<comment type="catalytic activity">
    <reaction>
        <text>(S)-dihydroorotate + fumarate = orotate + succinate</text>
        <dbReference type="Rhea" id="RHEA:30059"/>
        <dbReference type="ChEBI" id="CHEBI:29806"/>
        <dbReference type="ChEBI" id="CHEBI:30031"/>
        <dbReference type="ChEBI" id="CHEBI:30839"/>
        <dbReference type="ChEBI" id="CHEBI:30864"/>
        <dbReference type="EC" id="1.3.98.1"/>
    </reaction>
</comment>
<comment type="cofactor">
    <cofactor evidence="1">
        <name>FMN</name>
        <dbReference type="ChEBI" id="CHEBI:58210"/>
    </cofactor>
    <text evidence="1">Binds 1 FMN per subunit.</text>
</comment>
<comment type="pathway">
    <text>Pyrimidine metabolism; UMP biosynthesis via de novo pathway.</text>
</comment>
<comment type="subunit">
    <text evidence="1">Homodimer.</text>
</comment>
<comment type="subcellular location">
    <subcellularLocation>
        <location evidence="1">Cytoplasm</location>
    </subcellularLocation>
</comment>
<comment type="similarity">
    <text evidence="2">Belongs to the dihydroorotate dehydrogenase family. Type 1 subfamily.</text>
</comment>
<keyword id="KW-0963">Cytoplasm</keyword>
<keyword id="KW-0285">Flavoprotein</keyword>
<keyword id="KW-0288">FMN</keyword>
<keyword id="KW-0560">Oxidoreductase</keyword>
<keyword id="KW-0665">Pyrimidine biosynthesis</keyword>
<keyword id="KW-1185">Reference proteome</keyword>
<organism>
    <name type="scientific">Limosilactobacillus reuteri (strain DSM 20016)</name>
    <name type="common">Lactobacillus reuteri</name>
    <dbReference type="NCBI Taxonomy" id="557436"/>
    <lineage>
        <taxon>Bacteria</taxon>
        <taxon>Bacillati</taxon>
        <taxon>Bacillota</taxon>
        <taxon>Bacilli</taxon>
        <taxon>Lactobacillales</taxon>
        <taxon>Lactobacillaceae</taxon>
        <taxon>Limosilactobacillus</taxon>
    </lineage>
</organism>
<proteinExistence type="inferred from homology"/>
<gene>
    <name type="primary">pyrD</name>
    <name type="ordered locus">Lreu_0125</name>
</gene>